<sequence length="343" mass="40069">MNALHQKCAVCGRFTTEFNYSVLSCNSCKIFFRRLIVRTVPIKKCFRGERCFEKTPYIFKCTSCRFQKCLYVGMTLPSYLLVLEQNKEQRLAITIDCVRNTHNKRMDSLFNFFVTEMNPNVDDIVELNKITYTKRDEHIRMDFQTWAFHSCVTTIDFMKQFPFVNLLRSTDQMILLKESYVKLGALISATRAYSSKKQCISFPDGTDCLPKTQWTVPKISPNLENRIRCRVIDKLRELNIQNDEFYLLSVLLFCNPAITNLSENGQLLLTSYQKMYSSALLYYCLLTYQKSGPSRFSELLGLFTLLGQHYDDIIHYYVLMQLNQSEVELKKLVKDGIEAAYKS</sequence>
<evidence type="ECO:0000255" key="1">
    <source>
        <dbReference type="PROSITE-ProRule" id="PRU00407"/>
    </source>
</evidence>
<evidence type="ECO:0000255" key="2">
    <source>
        <dbReference type="PROSITE-ProRule" id="PRU01189"/>
    </source>
</evidence>
<evidence type="ECO:0000305" key="3"/>
<comment type="function">
    <text>Orphan nuclear receptor.</text>
</comment>
<comment type="subcellular location">
    <subcellularLocation>
        <location evidence="1">Nucleus</location>
    </subcellularLocation>
</comment>
<comment type="similarity">
    <text evidence="3">Belongs to the nuclear hormone receptor family.</text>
</comment>
<dbReference type="EMBL" id="Z81485">
    <property type="protein sequence ID" value="CAB03978.1"/>
    <property type="molecule type" value="Genomic_DNA"/>
</dbReference>
<dbReference type="PIR" id="T20073">
    <property type="entry name" value="T20073"/>
</dbReference>
<dbReference type="RefSeq" id="NP_510004.1">
    <property type="nucleotide sequence ID" value="NM_077603.6"/>
</dbReference>
<dbReference type="SMR" id="O17683"/>
<dbReference type="STRING" id="6239.C49F5.4.1"/>
<dbReference type="PaxDb" id="6239-C49F5.4"/>
<dbReference type="EnsemblMetazoa" id="C49F5.4.1">
    <property type="protein sequence ID" value="C49F5.4.1"/>
    <property type="gene ID" value="WBGene00008208"/>
</dbReference>
<dbReference type="GeneID" id="183613"/>
<dbReference type="KEGG" id="cel:CELE_C49F5.4"/>
<dbReference type="UCSC" id="C49F5.4">
    <property type="organism name" value="c. elegans"/>
</dbReference>
<dbReference type="AGR" id="WB:WBGene00008208"/>
<dbReference type="CTD" id="183613"/>
<dbReference type="WormBase" id="C49F5.4">
    <property type="protein sequence ID" value="CE08855"/>
    <property type="gene ID" value="WBGene00008208"/>
    <property type="gene designation" value="nhr-167"/>
</dbReference>
<dbReference type="eggNOG" id="ENOG502THC0">
    <property type="taxonomic scope" value="Eukaryota"/>
</dbReference>
<dbReference type="GeneTree" id="ENSGT00970000195839"/>
<dbReference type="HOGENOM" id="CLU_007368_3_0_1"/>
<dbReference type="InParanoid" id="O17683"/>
<dbReference type="OMA" id="CHVIGKH"/>
<dbReference type="OrthoDB" id="5834414at2759"/>
<dbReference type="PhylomeDB" id="O17683"/>
<dbReference type="PRO" id="PR:O17683"/>
<dbReference type="Proteomes" id="UP000001940">
    <property type="component" value="Chromosome X"/>
</dbReference>
<dbReference type="Bgee" id="WBGene00008208">
    <property type="expression patterns" value="Expressed in larva and 1 other cell type or tissue"/>
</dbReference>
<dbReference type="GO" id="GO:0005634">
    <property type="term" value="C:nucleus"/>
    <property type="evidence" value="ECO:0007669"/>
    <property type="project" value="UniProtKB-SubCell"/>
</dbReference>
<dbReference type="GO" id="GO:0003700">
    <property type="term" value="F:DNA-binding transcription factor activity"/>
    <property type="evidence" value="ECO:0007669"/>
    <property type="project" value="InterPro"/>
</dbReference>
<dbReference type="GO" id="GO:0043565">
    <property type="term" value="F:sequence-specific DNA binding"/>
    <property type="evidence" value="ECO:0007669"/>
    <property type="project" value="InterPro"/>
</dbReference>
<dbReference type="GO" id="GO:0008270">
    <property type="term" value="F:zinc ion binding"/>
    <property type="evidence" value="ECO:0007669"/>
    <property type="project" value="UniProtKB-KW"/>
</dbReference>
<dbReference type="Gene3D" id="3.30.50.10">
    <property type="entry name" value="Erythroid Transcription Factor GATA-1, subunit A"/>
    <property type="match status" value="1"/>
</dbReference>
<dbReference type="Gene3D" id="1.10.565.10">
    <property type="entry name" value="Retinoid X Receptor"/>
    <property type="match status" value="1"/>
</dbReference>
<dbReference type="InterPro" id="IPR035500">
    <property type="entry name" value="NHR-like_dom_sf"/>
</dbReference>
<dbReference type="InterPro" id="IPR000536">
    <property type="entry name" value="Nucl_hrmn_rcpt_lig-bd"/>
</dbReference>
<dbReference type="InterPro" id="IPR001628">
    <property type="entry name" value="Znf_hrmn_rcpt"/>
</dbReference>
<dbReference type="InterPro" id="IPR013088">
    <property type="entry name" value="Znf_NHR/GATA"/>
</dbReference>
<dbReference type="PANTHER" id="PTHR45886:SF11">
    <property type="entry name" value="NUCLEAR HORMONE RECEPTOR FAMILY-RELATED"/>
    <property type="match status" value="1"/>
</dbReference>
<dbReference type="PANTHER" id="PTHR45886">
    <property type="entry name" value="NUCLEAR HORMONE RECEPTOR FAMILY-RELATED-RELATED"/>
    <property type="match status" value="1"/>
</dbReference>
<dbReference type="Pfam" id="PF00104">
    <property type="entry name" value="Hormone_recep"/>
    <property type="match status" value="1"/>
</dbReference>
<dbReference type="Pfam" id="PF00105">
    <property type="entry name" value="zf-C4"/>
    <property type="match status" value="1"/>
</dbReference>
<dbReference type="PRINTS" id="PR00047">
    <property type="entry name" value="STROIDFINGER"/>
</dbReference>
<dbReference type="SMART" id="SM00430">
    <property type="entry name" value="HOLI"/>
    <property type="match status" value="1"/>
</dbReference>
<dbReference type="SMART" id="SM00399">
    <property type="entry name" value="ZnF_C4"/>
    <property type="match status" value="1"/>
</dbReference>
<dbReference type="SUPFAM" id="SSF57716">
    <property type="entry name" value="Glucocorticoid receptor-like (DNA-binding domain)"/>
    <property type="match status" value="1"/>
</dbReference>
<dbReference type="SUPFAM" id="SSF48508">
    <property type="entry name" value="Nuclear receptor ligand-binding domain"/>
    <property type="match status" value="1"/>
</dbReference>
<dbReference type="PROSITE" id="PS51843">
    <property type="entry name" value="NR_LBD"/>
    <property type="match status" value="1"/>
</dbReference>
<dbReference type="PROSITE" id="PS51030">
    <property type="entry name" value="NUCLEAR_REC_DBD_2"/>
    <property type="match status" value="1"/>
</dbReference>
<organism>
    <name type="scientific">Caenorhabditis elegans</name>
    <dbReference type="NCBI Taxonomy" id="6239"/>
    <lineage>
        <taxon>Eukaryota</taxon>
        <taxon>Metazoa</taxon>
        <taxon>Ecdysozoa</taxon>
        <taxon>Nematoda</taxon>
        <taxon>Chromadorea</taxon>
        <taxon>Rhabditida</taxon>
        <taxon>Rhabditina</taxon>
        <taxon>Rhabditomorpha</taxon>
        <taxon>Rhabditoidea</taxon>
        <taxon>Rhabditidae</taxon>
        <taxon>Peloderinae</taxon>
        <taxon>Caenorhabditis</taxon>
    </lineage>
</organism>
<reference key="1">
    <citation type="journal article" date="1998" name="Science">
        <title>Genome sequence of the nematode C. elegans: a platform for investigating biology.</title>
        <authorList>
            <consortium name="The C. elegans sequencing consortium"/>
        </authorList>
    </citation>
    <scope>NUCLEOTIDE SEQUENCE [LARGE SCALE GENOMIC DNA]</scope>
    <source>
        <strain>Bristol N2</strain>
    </source>
</reference>
<accession>O17683</accession>
<name>NH167_CAEEL</name>
<keyword id="KW-0238">DNA-binding</keyword>
<keyword id="KW-0479">Metal-binding</keyword>
<keyword id="KW-0539">Nucleus</keyword>
<keyword id="KW-0675">Receptor</keyword>
<keyword id="KW-1185">Reference proteome</keyword>
<keyword id="KW-0804">Transcription</keyword>
<keyword id="KW-0805">Transcription regulation</keyword>
<keyword id="KW-0862">Zinc</keyword>
<keyword id="KW-0863">Zinc-finger</keyword>
<gene>
    <name type="primary">nhr-167</name>
    <name type="ORF">C49F5.4</name>
</gene>
<proteinExistence type="inferred from homology"/>
<protein>
    <recommendedName>
        <fullName>Nuclear hormone receptor family member nhr-167</fullName>
    </recommendedName>
</protein>
<feature type="chain" id="PRO_0000223600" description="Nuclear hormone receptor family member nhr-167">
    <location>
        <begin position="1"/>
        <end position="343"/>
    </location>
</feature>
<feature type="domain" description="NR LBD" evidence="2">
    <location>
        <begin position="101"/>
        <end position="339"/>
    </location>
</feature>
<feature type="DNA-binding region" description="Nuclear receptor" evidence="1">
    <location>
        <begin position="5"/>
        <end position="81"/>
    </location>
</feature>
<feature type="zinc finger region" description="NR C4-type" evidence="1">
    <location>
        <begin position="8"/>
        <end position="28"/>
    </location>
</feature>
<feature type="zinc finger region" description="NR C4-type" evidence="1">
    <location>
        <begin position="45"/>
        <end position="64"/>
    </location>
</feature>